<reference key="1">
    <citation type="journal article" date="1993" name="Biochim. Biophys. Acta">
        <title>The human leucine zipper-containing guanine-nucleotide exchange protein elongation factor-1 delta.</title>
        <authorList>
            <person name="Sanders J.P."/>
            <person name="Raggiaschi R."/>
            <person name="Morales J."/>
            <person name="Moeller W."/>
        </authorList>
    </citation>
    <scope>NUCLEOTIDE SEQUENCE [MRNA] (ISOFORM 1)</scope>
    <scope>DOMAIN LEUCINE ZIPPER</scope>
    <source>
        <tissue>Skin fibroblast</tissue>
    </source>
</reference>
<reference key="2">
    <citation type="journal article" date="1998" name="Int. J. Cancer">
        <title>Characterization of human colon cancer antigens recognized by autologous antibodies.</title>
        <authorList>
            <person name="Scanlan M.J."/>
            <person name="Chen Y.-T."/>
            <person name="Williamson B."/>
            <person name="Gure A.O."/>
            <person name="Stockert E."/>
            <person name="Gordan J.D."/>
            <person name="Tuereci O."/>
            <person name="Sahin U."/>
            <person name="Pfreundschuh M."/>
            <person name="Old L.J."/>
        </authorList>
    </citation>
    <scope>NUCLEOTIDE SEQUENCE [MRNA] (ISOFORM 1)</scope>
    <source>
        <tissue>Colon carcinoma</tissue>
    </source>
</reference>
<reference key="3">
    <citation type="submission" date="2003-05" db="EMBL/GenBank/DDBJ databases">
        <title>Cloning of human full-length CDSs in BD Creator(TM) system donor vector.</title>
        <authorList>
            <person name="Kalnine N."/>
            <person name="Chen X."/>
            <person name="Rolfs A."/>
            <person name="Halleck A."/>
            <person name="Hines L."/>
            <person name="Eisenstein S."/>
            <person name="Koundinya M."/>
            <person name="Raphael J."/>
            <person name="Moreira D."/>
            <person name="Kelley T."/>
            <person name="LaBaer J."/>
            <person name="Lin Y."/>
            <person name="Phelan M."/>
            <person name="Farmer A."/>
        </authorList>
    </citation>
    <scope>NUCLEOTIDE SEQUENCE [LARGE SCALE MRNA] (ISOFORM 2)</scope>
</reference>
<reference key="4">
    <citation type="journal article" date="2004" name="Nat. Genet.">
        <title>Complete sequencing and characterization of 21,243 full-length human cDNAs.</title>
        <authorList>
            <person name="Ota T."/>
            <person name="Suzuki Y."/>
            <person name="Nishikawa T."/>
            <person name="Otsuki T."/>
            <person name="Sugiyama T."/>
            <person name="Irie R."/>
            <person name="Wakamatsu A."/>
            <person name="Hayashi K."/>
            <person name="Sato H."/>
            <person name="Nagai K."/>
            <person name="Kimura K."/>
            <person name="Makita H."/>
            <person name="Sekine M."/>
            <person name="Obayashi M."/>
            <person name="Nishi T."/>
            <person name="Shibahara T."/>
            <person name="Tanaka T."/>
            <person name="Ishii S."/>
            <person name="Yamamoto J."/>
            <person name="Saito K."/>
            <person name="Kawai Y."/>
            <person name="Isono Y."/>
            <person name="Nakamura Y."/>
            <person name="Nagahari K."/>
            <person name="Murakami K."/>
            <person name="Yasuda T."/>
            <person name="Iwayanagi T."/>
            <person name="Wagatsuma M."/>
            <person name="Shiratori A."/>
            <person name="Sudo H."/>
            <person name="Hosoiri T."/>
            <person name="Kaku Y."/>
            <person name="Kodaira H."/>
            <person name="Kondo H."/>
            <person name="Sugawara M."/>
            <person name="Takahashi M."/>
            <person name="Kanda K."/>
            <person name="Yokoi T."/>
            <person name="Furuya T."/>
            <person name="Kikkawa E."/>
            <person name="Omura Y."/>
            <person name="Abe K."/>
            <person name="Kamihara K."/>
            <person name="Katsuta N."/>
            <person name="Sato K."/>
            <person name="Tanikawa M."/>
            <person name="Yamazaki M."/>
            <person name="Ninomiya K."/>
            <person name="Ishibashi T."/>
            <person name="Yamashita H."/>
            <person name="Murakawa K."/>
            <person name="Fujimori K."/>
            <person name="Tanai H."/>
            <person name="Kimata M."/>
            <person name="Watanabe M."/>
            <person name="Hiraoka S."/>
            <person name="Chiba Y."/>
            <person name="Ishida S."/>
            <person name="Ono Y."/>
            <person name="Takiguchi S."/>
            <person name="Watanabe S."/>
            <person name="Yosida M."/>
            <person name="Hotuta T."/>
            <person name="Kusano J."/>
            <person name="Kanehori K."/>
            <person name="Takahashi-Fujii A."/>
            <person name="Hara H."/>
            <person name="Tanase T.-O."/>
            <person name="Nomura Y."/>
            <person name="Togiya S."/>
            <person name="Komai F."/>
            <person name="Hara R."/>
            <person name="Takeuchi K."/>
            <person name="Arita M."/>
            <person name="Imose N."/>
            <person name="Musashino K."/>
            <person name="Yuuki H."/>
            <person name="Oshima A."/>
            <person name="Sasaki N."/>
            <person name="Aotsuka S."/>
            <person name="Yoshikawa Y."/>
            <person name="Matsunawa H."/>
            <person name="Ichihara T."/>
            <person name="Shiohata N."/>
            <person name="Sano S."/>
            <person name="Moriya S."/>
            <person name="Momiyama H."/>
            <person name="Satoh N."/>
            <person name="Takami S."/>
            <person name="Terashima Y."/>
            <person name="Suzuki O."/>
            <person name="Nakagawa S."/>
            <person name="Senoh A."/>
            <person name="Mizoguchi H."/>
            <person name="Goto Y."/>
            <person name="Shimizu F."/>
            <person name="Wakebe H."/>
            <person name="Hishigaki H."/>
            <person name="Watanabe T."/>
            <person name="Sugiyama A."/>
            <person name="Takemoto M."/>
            <person name="Kawakami B."/>
            <person name="Yamazaki M."/>
            <person name="Watanabe K."/>
            <person name="Kumagai A."/>
            <person name="Itakura S."/>
            <person name="Fukuzumi Y."/>
            <person name="Fujimori Y."/>
            <person name="Komiyama M."/>
            <person name="Tashiro H."/>
            <person name="Tanigami A."/>
            <person name="Fujiwara T."/>
            <person name="Ono T."/>
            <person name="Yamada K."/>
            <person name="Fujii Y."/>
            <person name="Ozaki K."/>
            <person name="Hirao M."/>
            <person name="Ohmori Y."/>
            <person name="Kawabata A."/>
            <person name="Hikiji T."/>
            <person name="Kobatake N."/>
            <person name="Inagaki H."/>
            <person name="Ikema Y."/>
            <person name="Okamoto S."/>
            <person name="Okitani R."/>
            <person name="Kawakami T."/>
            <person name="Noguchi S."/>
            <person name="Itoh T."/>
            <person name="Shigeta K."/>
            <person name="Senba T."/>
            <person name="Matsumura K."/>
            <person name="Nakajima Y."/>
            <person name="Mizuno T."/>
            <person name="Morinaga M."/>
            <person name="Sasaki M."/>
            <person name="Togashi T."/>
            <person name="Oyama M."/>
            <person name="Hata H."/>
            <person name="Watanabe M."/>
            <person name="Komatsu T."/>
            <person name="Mizushima-Sugano J."/>
            <person name="Satoh T."/>
            <person name="Shirai Y."/>
            <person name="Takahashi Y."/>
            <person name="Nakagawa K."/>
            <person name="Okumura K."/>
            <person name="Nagase T."/>
            <person name="Nomura N."/>
            <person name="Kikuchi H."/>
            <person name="Masuho Y."/>
            <person name="Yamashita R."/>
            <person name="Nakai K."/>
            <person name="Yada T."/>
            <person name="Nakamura Y."/>
            <person name="Ohara O."/>
            <person name="Isogai T."/>
            <person name="Sugano S."/>
        </authorList>
    </citation>
    <scope>NUCLEOTIDE SEQUENCE [LARGE SCALE MRNA] (ISOFORM 4)</scope>
</reference>
<reference key="5">
    <citation type="journal article" date="2006" name="Nature">
        <title>DNA sequence and analysis of human chromosome 8.</title>
        <authorList>
            <person name="Nusbaum C."/>
            <person name="Mikkelsen T.S."/>
            <person name="Zody M.C."/>
            <person name="Asakawa S."/>
            <person name="Taudien S."/>
            <person name="Garber M."/>
            <person name="Kodira C.D."/>
            <person name="Schueler M.G."/>
            <person name="Shimizu A."/>
            <person name="Whittaker C.A."/>
            <person name="Chang J.L."/>
            <person name="Cuomo C.A."/>
            <person name="Dewar K."/>
            <person name="FitzGerald M.G."/>
            <person name="Yang X."/>
            <person name="Allen N.R."/>
            <person name="Anderson S."/>
            <person name="Asakawa T."/>
            <person name="Blechschmidt K."/>
            <person name="Bloom T."/>
            <person name="Borowsky M.L."/>
            <person name="Butler J."/>
            <person name="Cook A."/>
            <person name="Corum B."/>
            <person name="DeArellano K."/>
            <person name="DeCaprio D."/>
            <person name="Dooley K.T."/>
            <person name="Dorris L. III"/>
            <person name="Engels R."/>
            <person name="Gloeckner G."/>
            <person name="Hafez N."/>
            <person name="Hagopian D.S."/>
            <person name="Hall J.L."/>
            <person name="Ishikawa S.K."/>
            <person name="Jaffe D.B."/>
            <person name="Kamat A."/>
            <person name="Kudoh J."/>
            <person name="Lehmann R."/>
            <person name="Lokitsang T."/>
            <person name="Macdonald P."/>
            <person name="Major J.E."/>
            <person name="Matthews C.D."/>
            <person name="Mauceli E."/>
            <person name="Menzel U."/>
            <person name="Mihalev A.H."/>
            <person name="Minoshima S."/>
            <person name="Murayama Y."/>
            <person name="Naylor J.W."/>
            <person name="Nicol R."/>
            <person name="Nguyen C."/>
            <person name="O'Leary S.B."/>
            <person name="O'Neill K."/>
            <person name="Parker S.C.J."/>
            <person name="Polley A."/>
            <person name="Raymond C.K."/>
            <person name="Reichwald K."/>
            <person name="Rodriguez J."/>
            <person name="Sasaki T."/>
            <person name="Schilhabel M."/>
            <person name="Siddiqui R."/>
            <person name="Smith C.L."/>
            <person name="Sneddon T.P."/>
            <person name="Talamas J.A."/>
            <person name="Tenzin P."/>
            <person name="Topham K."/>
            <person name="Venkataraman V."/>
            <person name="Wen G."/>
            <person name="Yamazaki S."/>
            <person name="Young S.K."/>
            <person name="Zeng Q."/>
            <person name="Zimmer A.R."/>
            <person name="Rosenthal A."/>
            <person name="Birren B.W."/>
            <person name="Platzer M."/>
            <person name="Shimizu N."/>
            <person name="Lander E.S."/>
        </authorList>
    </citation>
    <scope>NUCLEOTIDE SEQUENCE [LARGE SCALE GENOMIC DNA]</scope>
</reference>
<reference key="6">
    <citation type="submission" date="2005-07" db="EMBL/GenBank/DDBJ databases">
        <authorList>
            <person name="Mural R.J."/>
            <person name="Istrail S."/>
            <person name="Sutton G.G."/>
            <person name="Florea L."/>
            <person name="Halpern A.L."/>
            <person name="Mobarry C.M."/>
            <person name="Lippert R."/>
            <person name="Walenz B."/>
            <person name="Shatkay H."/>
            <person name="Dew I."/>
            <person name="Miller J.R."/>
            <person name="Flanigan M.J."/>
            <person name="Edwards N.J."/>
            <person name="Bolanos R."/>
            <person name="Fasulo D."/>
            <person name="Halldorsson B.V."/>
            <person name="Hannenhalli S."/>
            <person name="Turner R."/>
            <person name="Yooseph S."/>
            <person name="Lu F."/>
            <person name="Nusskern D.R."/>
            <person name="Shue B.C."/>
            <person name="Zheng X.H."/>
            <person name="Zhong F."/>
            <person name="Delcher A.L."/>
            <person name="Huson D.H."/>
            <person name="Kravitz S.A."/>
            <person name="Mouchard L."/>
            <person name="Reinert K."/>
            <person name="Remington K.A."/>
            <person name="Clark A.G."/>
            <person name="Waterman M.S."/>
            <person name="Eichler E.E."/>
            <person name="Adams M.D."/>
            <person name="Hunkapiller M.W."/>
            <person name="Myers E.W."/>
            <person name="Venter J.C."/>
        </authorList>
    </citation>
    <scope>NUCLEOTIDE SEQUENCE [LARGE SCALE GENOMIC DNA]</scope>
</reference>
<reference key="7">
    <citation type="submission" date="2005-09" db="EMBL/GenBank/DDBJ databases">
        <authorList>
            <person name="Mural R.J."/>
            <person name="Istrail S."/>
            <person name="Sutton G.G."/>
            <person name="Florea L."/>
            <person name="Halpern A.L."/>
            <person name="Mobarry C.M."/>
            <person name="Lippert R."/>
            <person name="Walenz B."/>
            <person name="Shatkay H."/>
            <person name="Dew I."/>
            <person name="Miller J.R."/>
            <person name="Flanigan M.J."/>
            <person name="Edwards N.J."/>
            <person name="Bolanos R."/>
            <person name="Fasulo D."/>
            <person name="Halldorsson B.V."/>
            <person name="Hannenhalli S."/>
            <person name="Turner R."/>
            <person name="Yooseph S."/>
            <person name="Lu F."/>
            <person name="Nusskern D.R."/>
            <person name="Shue B.C."/>
            <person name="Zheng X.H."/>
            <person name="Zhong F."/>
            <person name="Delcher A.L."/>
            <person name="Huson D.H."/>
            <person name="Kravitz S.A."/>
            <person name="Mouchard L."/>
            <person name="Reinert K."/>
            <person name="Remington K.A."/>
            <person name="Clark A.G."/>
            <person name="Waterman M.S."/>
            <person name="Eichler E.E."/>
            <person name="Adams M.D."/>
            <person name="Hunkapiller M.W."/>
            <person name="Myers E.W."/>
            <person name="Venter J.C."/>
        </authorList>
    </citation>
    <scope>NUCLEOTIDE SEQUENCE [LARGE SCALE GENOMIC DNA]</scope>
</reference>
<reference key="8">
    <citation type="journal article" date="2004" name="Genome Res.">
        <title>The status, quality, and expansion of the NIH full-length cDNA project: the Mammalian Gene Collection (MGC).</title>
        <authorList>
            <consortium name="The MGC Project Team"/>
        </authorList>
    </citation>
    <scope>NUCLEOTIDE SEQUENCE [LARGE SCALE MRNA] (ISOFORMS 1; 2 AND 3)</scope>
    <source>
        <tissue>Brain</tissue>
        <tissue>Lung</tissue>
        <tissue>Muscle</tissue>
    </source>
</reference>
<reference key="9">
    <citation type="submission" date="2004-07" db="UniProtKB">
        <authorList>
            <person name="Bienvenut W.V."/>
            <person name="Potts A."/>
            <person name="Barblan J."/>
            <person name="Quadroni M."/>
        </authorList>
    </citation>
    <scope>PROTEIN SEQUENCE OF 2-10 (ISOFORM 1)</scope>
    <scope>ACETYLATION AT ALA-2</scope>
    <scope>IDENTIFICATION BY MASS SPECTROMETRY</scope>
    <source>
        <tissue>B-cell lymphoma</tissue>
    </source>
</reference>
<reference key="10">
    <citation type="journal article" date="1994" name="Cancer Res.">
        <title>Elongation factor 1 delta is enhanced following exposure to ionizing radiation.</title>
        <authorList>
            <person name="Jung M."/>
            <person name="Kondratyev A.D."/>
            <person name="Dritschilo A."/>
        </authorList>
    </citation>
    <scope>INDUCTION BY IONIZING RADIATION</scope>
</reference>
<reference key="11">
    <citation type="journal article" date="1998" name="J. Biol. Chem.">
        <title>Induction of acute translational response genes by homocysteine. Elongation factors-1alpha, -beta, and -delta.</title>
        <authorList>
            <person name="Chacko G."/>
            <person name="Ling Q."/>
            <person name="Hajjar K.A."/>
        </authorList>
    </citation>
    <scope>INDUCTION BY HOMOCYSTEINE</scope>
</reference>
<reference key="12">
    <citation type="journal article" date="2006" name="Cell">
        <title>Global, in vivo, and site-specific phosphorylation dynamics in signaling networks.</title>
        <authorList>
            <person name="Olsen J.V."/>
            <person name="Blagoev B."/>
            <person name="Gnad F."/>
            <person name="Macek B."/>
            <person name="Kumar C."/>
            <person name="Mortensen P."/>
            <person name="Mann M."/>
        </authorList>
    </citation>
    <scope>PHOSPHORYLATION [LARGE SCALE ANALYSIS] AT SER-133; THR-147 AND SER-162</scope>
    <scope>IDENTIFICATION BY MASS SPECTROMETRY [LARGE SCALE ANALYSIS]</scope>
    <source>
        <tissue>Cervix carcinoma</tissue>
    </source>
</reference>
<reference key="13">
    <citation type="journal article" date="2006" name="Pituitary">
        <title>Phosphoproteomic analysis of the human pituitary.</title>
        <authorList>
            <person name="Beranova-Giorgianni S."/>
            <person name="Zhao Y."/>
            <person name="Desiderio D.M."/>
            <person name="Giorgianni F."/>
        </authorList>
    </citation>
    <scope>PHOSPHORYLATION [LARGE SCALE ANALYSIS] AT SER-162</scope>
    <scope>IDENTIFICATION BY MASS SPECTROMETRY [LARGE SCALE ANALYSIS]</scope>
    <source>
        <tissue>Pituitary</tissue>
    </source>
</reference>
<reference key="14">
    <citation type="journal article" date="2007" name="Electrophoresis">
        <title>Toward a global characterization of the phosphoproteome in prostate cancer cells: identification of phosphoproteins in the LNCaP cell line.</title>
        <authorList>
            <person name="Giorgianni F."/>
            <person name="Zhao Y."/>
            <person name="Desiderio D.M."/>
            <person name="Beranova-Giorgianni S."/>
        </authorList>
    </citation>
    <scope>PHOSPHORYLATION [LARGE SCALE ANALYSIS] AT SER-133 AND SER-162</scope>
    <scope>IDENTIFICATION BY MASS SPECTROMETRY [LARGE SCALE ANALYSIS]</scope>
    <source>
        <tissue>Prostate cancer</tissue>
    </source>
</reference>
<reference key="15">
    <citation type="journal article" date="2007" name="J. Proteome Res.">
        <title>Improved titanium dioxide enrichment of phosphopeptides from HeLa cells and high confident phosphopeptide identification by cross-validation of MS/MS and MS/MS/MS spectra.</title>
        <authorList>
            <person name="Yu L.R."/>
            <person name="Zhu Z."/>
            <person name="Chan K.C."/>
            <person name="Issaq H.J."/>
            <person name="Dimitrov D.S."/>
            <person name="Veenstra T.D."/>
        </authorList>
    </citation>
    <scope>PHOSPHORYLATION [LARGE SCALE ANALYSIS] AT SER-133</scope>
    <scope>IDENTIFICATION BY MASS SPECTROMETRY [LARGE SCALE ANALYSIS]</scope>
    <source>
        <tissue>Cervix carcinoma</tissue>
    </source>
</reference>
<reference key="16">
    <citation type="journal article" date="2007" name="Mol. Cell. Proteomics">
        <title>Quantitative phosphoproteome profiling of Wnt3a-mediated signaling network: indicating the involvement of ribonucleoside-diphosphate reductase M2 subunit phosphorylation at residue serine 20 in canonical Wnt signal transduction.</title>
        <authorList>
            <person name="Tang L.-Y."/>
            <person name="Deng N."/>
            <person name="Wang L.-S."/>
            <person name="Dai J."/>
            <person name="Wang Z.-L."/>
            <person name="Jiang X.-S."/>
            <person name="Li S.-J."/>
            <person name="Li L."/>
            <person name="Sheng Q.-H."/>
            <person name="Wu D.-Q."/>
            <person name="Li L."/>
            <person name="Zeng R."/>
        </authorList>
    </citation>
    <scope>PHOSPHORYLATION [LARGE SCALE ANALYSIS] AT SER-162</scope>
    <scope>IDENTIFICATION BY MASS SPECTROMETRY [LARGE SCALE ANALYSIS]</scope>
    <source>
        <tissue>Embryonic kidney</tissue>
    </source>
</reference>
<reference key="17">
    <citation type="journal article" date="2008" name="J. Proteome Res.">
        <title>Combining protein-based IMAC, peptide-based IMAC, and MudPIT for efficient phosphoproteomic analysis.</title>
        <authorList>
            <person name="Cantin G.T."/>
            <person name="Yi W."/>
            <person name="Lu B."/>
            <person name="Park S.K."/>
            <person name="Xu T."/>
            <person name="Lee J.-D."/>
            <person name="Yates J.R. III"/>
        </authorList>
    </citation>
    <scope>PHOSPHORYLATION [LARGE SCALE ANALYSIS] AT SER-133</scope>
    <scope>IDENTIFICATION BY MASS SPECTROMETRY [LARGE SCALE ANALYSIS]</scope>
    <source>
        <tissue>Cervix carcinoma</tissue>
    </source>
</reference>
<reference key="18">
    <citation type="journal article" date="2008" name="J. Proteome Res.">
        <title>Phosphorylation analysis of primary human T lymphocytes using sequential IMAC and titanium oxide enrichment.</title>
        <authorList>
            <person name="Carrascal M."/>
            <person name="Ovelleiro D."/>
            <person name="Casas V."/>
            <person name="Gay M."/>
            <person name="Abian J."/>
        </authorList>
    </citation>
    <scope>PHOSPHORYLATION [LARGE SCALE ANALYSIS] AT SER-162</scope>
    <scope>IDENTIFICATION BY MASS SPECTROMETRY [LARGE SCALE ANALYSIS]</scope>
    <source>
        <tissue>T-cell</tissue>
    </source>
</reference>
<reference key="19">
    <citation type="journal article" date="2008" name="Mol. Cell">
        <title>Kinase-selective enrichment enables quantitative phosphoproteomics of the kinome across the cell cycle.</title>
        <authorList>
            <person name="Daub H."/>
            <person name="Olsen J.V."/>
            <person name="Bairlein M."/>
            <person name="Gnad F."/>
            <person name="Oppermann F.S."/>
            <person name="Korner R."/>
            <person name="Greff Z."/>
            <person name="Keri G."/>
            <person name="Stemmann O."/>
            <person name="Mann M."/>
        </authorList>
    </citation>
    <scope>PHOSPHORYLATION [LARGE SCALE ANALYSIS] AT SER-133; THR-147 AND SER-162</scope>
    <scope>IDENTIFICATION BY MASS SPECTROMETRY [LARGE SCALE ANALYSIS]</scope>
    <source>
        <tissue>Cervix carcinoma</tissue>
    </source>
</reference>
<reference key="20">
    <citation type="journal article" date="2008" name="Proc. Natl. Acad. Sci. U.S.A.">
        <title>A quantitative atlas of mitotic phosphorylation.</title>
        <authorList>
            <person name="Dephoure N."/>
            <person name="Zhou C."/>
            <person name="Villen J."/>
            <person name="Beausoleil S.A."/>
            <person name="Bakalarski C.E."/>
            <person name="Elledge S.J."/>
            <person name="Gygi S.P."/>
        </authorList>
    </citation>
    <scope>PHOSPHORYLATION [LARGE SCALE ANALYSIS] AT SER-133</scope>
    <scope>PHOSPHORYLATION [LARGE SCALE ANALYSIS] AT SER-91 AND SER-94 (ISOFORM 2)</scope>
    <scope>PHOSPHORYLATION [LARGE SCALE ANALYSIS] AT SER-40 (ISOFORM 3)</scope>
    <scope>IDENTIFICATION BY MASS SPECTROMETRY [LARGE SCALE ANALYSIS]</scope>
    <source>
        <tissue>Cervix carcinoma</tissue>
    </source>
</reference>
<reference key="21">
    <citation type="journal article" date="2008" name="Proteomics">
        <title>Large-scale phosphoproteome analysis of human liver tissue by enrichment and fractionation of phosphopeptides with strong anion exchange chromatography.</title>
        <authorList>
            <person name="Han G."/>
            <person name="Ye M."/>
            <person name="Zhou H."/>
            <person name="Jiang X."/>
            <person name="Feng S."/>
            <person name="Jiang X."/>
            <person name="Tian R."/>
            <person name="Wan D."/>
            <person name="Zou H."/>
            <person name="Gu J."/>
        </authorList>
    </citation>
    <scope>PHOSPHORYLATION [LARGE SCALE ANALYSIS] AT SER-162</scope>
    <scope>IDENTIFICATION BY MASS SPECTROMETRY [LARGE SCALE ANALYSIS]</scope>
    <source>
        <tissue>Liver</tissue>
    </source>
</reference>
<reference key="22">
    <citation type="journal article" date="2009" name="Anal. Chem.">
        <title>Lys-N and trypsin cover complementary parts of the phosphoproteome in a refined SCX-based approach.</title>
        <authorList>
            <person name="Gauci S."/>
            <person name="Helbig A.O."/>
            <person name="Slijper M."/>
            <person name="Krijgsveld J."/>
            <person name="Heck A.J."/>
            <person name="Mohammed S."/>
        </authorList>
    </citation>
    <scope>IDENTIFICATION BY MASS SPECTROMETRY [LARGE SCALE ANALYSIS]</scope>
</reference>
<reference key="23">
    <citation type="journal article" date="2009" name="Mol. Cell. Proteomics">
        <title>Large-scale proteomics analysis of the human kinome.</title>
        <authorList>
            <person name="Oppermann F.S."/>
            <person name="Gnad F."/>
            <person name="Olsen J.V."/>
            <person name="Hornberger R."/>
            <person name="Greff Z."/>
            <person name="Keri G."/>
            <person name="Mann M."/>
            <person name="Daub H."/>
        </authorList>
    </citation>
    <scope>PHOSPHORYLATION [LARGE SCALE ANALYSIS] AT SER-133 AND SER-162</scope>
    <scope>IDENTIFICATION BY MASS SPECTROMETRY [LARGE SCALE ANALYSIS]</scope>
</reference>
<reference key="24">
    <citation type="journal article" date="2009" name="Sci. Signal.">
        <title>Quantitative phosphoproteomic analysis of T cell receptor signaling reveals system-wide modulation of protein-protein interactions.</title>
        <authorList>
            <person name="Mayya V."/>
            <person name="Lundgren D.H."/>
            <person name="Hwang S.-I."/>
            <person name="Rezaul K."/>
            <person name="Wu L."/>
            <person name="Eng J.K."/>
            <person name="Rodionov V."/>
            <person name="Han D.K."/>
        </authorList>
    </citation>
    <scope>PHOSPHORYLATION [LARGE SCALE ANALYSIS] AT THR-147 AND SER-162</scope>
    <scope>IDENTIFICATION BY MASS SPECTROMETRY [LARGE SCALE ANALYSIS]</scope>
    <source>
        <tissue>Leukemic T-cell</tissue>
    </source>
</reference>
<reference key="25">
    <citation type="journal article" date="2009" name="Science">
        <title>Lysine acetylation targets protein complexes and co-regulates major cellular functions.</title>
        <authorList>
            <person name="Choudhary C."/>
            <person name="Kumar C."/>
            <person name="Gnad F."/>
            <person name="Nielsen M.L."/>
            <person name="Rehman M."/>
            <person name="Walther T.C."/>
            <person name="Olsen J.V."/>
            <person name="Mann M."/>
        </authorList>
    </citation>
    <scope>ACETYLATION [LARGE SCALE ANALYSIS] AT LYS-17; LYS-107 AND LYS-117</scope>
    <scope>IDENTIFICATION BY MASS SPECTROMETRY [LARGE SCALE ANALYSIS]</scope>
</reference>
<reference key="26">
    <citation type="journal article" date="2010" name="Sci. Signal.">
        <title>Quantitative phosphoproteomics reveals widespread full phosphorylation site occupancy during mitosis.</title>
        <authorList>
            <person name="Olsen J.V."/>
            <person name="Vermeulen M."/>
            <person name="Santamaria A."/>
            <person name="Kumar C."/>
            <person name="Miller M.L."/>
            <person name="Jensen L.J."/>
            <person name="Gnad F."/>
            <person name="Cox J."/>
            <person name="Jensen T.S."/>
            <person name="Nigg E.A."/>
            <person name="Brunak S."/>
            <person name="Mann M."/>
        </authorList>
    </citation>
    <scope>PHOSPHORYLATION [LARGE SCALE ANALYSIS] AT SER-133 AND SER-162</scope>
    <scope>IDENTIFICATION BY MASS SPECTROMETRY [LARGE SCALE ANALYSIS]</scope>
    <source>
        <tissue>Cervix carcinoma</tissue>
    </source>
</reference>
<reference key="27">
    <citation type="journal article" date="2011" name="BMC Syst. Biol.">
        <title>Initial characterization of the human central proteome.</title>
        <authorList>
            <person name="Burkard T.R."/>
            <person name="Planyavsky M."/>
            <person name="Kaupe I."/>
            <person name="Breitwieser F.P."/>
            <person name="Buerckstuemmer T."/>
            <person name="Bennett K.L."/>
            <person name="Superti-Furga G."/>
            <person name="Colinge J."/>
        </authorList>
    </citation>
    <scope>IDENTIFICATION BY MASS SPECTROMETRY [LARGE SCALE ANALYSIS]</scope>
</reference>
<reference key="28">
    <citation type="journal article" date="2011" name="EMBO Rep.">
        <title>Transformation of eEF1Bdelta into heat-shock response transcription factor by alternative splicing.</title>
        <authorList>
            <person name="Kaitsuka T."/>
            <person name="Tomizawa K."/>
            <person name="Matsushita M."/>
        </authorList>
    </citation>
    <scope>FUNCTION (ISOFORM 2)</scope>
    <scope>INTERACTION WITH HSF1 AND NFE2L2 (ISOFORM 2)</scope>
    <scope>TISSUE SPECIFICITY (ISOFORM 2)</scope>
    <scope>DNA-BINDING (ISOFORM 2)</scope>
    <scope>SUBCELLULAR LOCATION (ISOFORM 2)</scope>
</reference>
<reference key="29">
    <citation type="journal article" date="2011" name="J. Proteome Res.">
        <title>Unbiased functional proteomics strategy for protein kinase inhibitor validation and identification of bona fide protein kinase substrates: application to identification of as a substrate for CK2.</title>
        <authorList>
            <person name="Gyenis L."/>
            <person name="Duncan J.S."/>
            <person name="Turowec J.P."/>
            <person name="Bretner M."/>
            <person name="Litchfield D.W."/>
        </authorList>
    </citation>
    <scope>PHOSPHORYLATION AT SER-162 BY CK2</scope>
</reference>
<reference key="30">
    <citation type="journal article" date="2011" name="Sci. Signal.">
        <title>System-wide temporal characterization of the proteome and phosphoproteome of human embryonic stem cell differentiation.</title>
        <authorList>
            <person name="Rigbolt K.T."/>
            <person name="Prokhorova T.A."/>
            <person name="Akimov V."/>
            <person name="Henningsen J."/>
            <person name="Johansen P.T."/>
            <person name="Kratchmarova I."/>
            <person name="Kassem M."/>
            <person name="Mann M."/>
            <person name="Olsen J.V."/>
            <person name="Blagoev B."/>
        </authorList>
    </citation>
    <scope>PHOSPHORYLATION [LARGE SCALE ANALYSIS] AT SER-133 AND SER-162</scope>
    <scope>IDENTIFICATION BY MASS SPECTROMETRY [LARGE SCALE ANALYSIS]</scope>
</reference>
<reference key="31">
    <citation type="journal article" date="2012" name="Mol. Cell. Proteomics">
        <title>Comparative large-scale characterisation of plant vs. mammal proteins reveals similar and idiosyncratic N-alpha acetylation features.</title>
        <authorList>
            <person name="Bienvenut W.V."/>
            <person name="Sumpton D."/>
            <person name="Martinez A."/>
            <person name="Lilla S."/>
            <person name="Espagne C."/>
            <person name="Meinnel T."/>
            <person name="Giglione C."/>
        </authorList>
    </citation>
    <scope>ACETYLATION [LARGE SCALE ANALYSIS] AT ALA-2</scope>
    <scope>CLEAVAGE OF INITIATOR METHIONINE [LARGE SCALE ANALYSIS]</scope>
    <scope>IDENTIFICATION BY MASS SPECTROMETRY [LARGE SCALE ANALYSIS]</scope>
</reference>
<reference key="32">
    <citation type="journal article" date="2013" name="J. Proteome Res.">
        <title>Toward a comprehensive characterization of a human cancer cell phosphoproteome.</title>
        <authorList>
            <person name="Zhou H."/>
            <person name="Di Palma S."/>
            <person name="Preisinger C."/>
            <person name="Peng M."/>
            <person name="Polat A.N."/>
            <person name="Heck A.J."/>
            <person name="Mohammed S."/>
        </authorList>
    </citation>
    <scope>PHOSPHORYLATION [LARGE SCALE ANALYSIS] AT SER-37; SER-44; SER-60; SER-86; SER-119; THR-129; SER-133; THR-147 AND SER-162</scope>
    <scope>IDENTIFICATION BY MASS SPECTROMETRY [LARGE SCALE ANALYSIS]</scope>
    <source>
        <tissue>Cervix carcinoma</tissue>
        <tissue>Erythroleukemia</tissue>
    </source>
</reference>
<reference key="33">
    <citation type="journal article" date="2014" name="J. Proteomics">
        <title>An enzyme assisted RP-RPLC approach for in-depth analysis of human liver phosphoproteome.</title>
        <authorList>
            <person name="Bian Y."/>
            <person name="Song C."/>
            <person name="Cheng K."/>
            <person name="Dong M."/>
            <person name="Wang F."/>
            <person name="Huang J."/>
            <person name="Sun D."/>
            <person name="Wang L."/>
            <person name="Ye M."/>
            <person name="Zou H."/>
        </authorList>
    </citation>
    <scope>PHOSPHORYLATION [LARGE SCALE ANALYSIS] AT SER-60; THR-73; THR-129; SER-133 AND SER-162</scope>
    <scope>IDENTIFICATION BY MASS SPECTROMETRY [LARGE SCALE ANALYSIS]</scope>
    <source>
        <tissue>Liver</tissue>
    </source>
</reference>
<reference key="34">
    <citation type="journal article" date="2015" name="Proteomics">
        <title>N-terminome analysis of the human mitochondrial proteome.</title>
        <authorList>
            <person name="Vaca Jacome A.S."/>
            <person name="Rabilloud T."/>
            <person name="Schaeffer-Reiss C."/>
            <person name="Rompais M."/>
            <person name="Ayoub D."/>
            <person name="Lane L."/>
            <person name="Bairoch A."/>
            <person name="Van Dorsselaer A."/>
            <person name="Carapito C."/>
        </authorList>
    </citation>
    <scope>ACETYLATION [LARGE SCALE ANALYSIS] AT ALA-2</scope>
    <scope>CLEAVAGE OF INITIATOR METHIONINE [LARGE SCALE ANALYSIS]</scope>
    <scope>IDENTIFICATION BY MASS SPECTROMETRY [LARGE SCALE ANALYSIS]</scope>
</reference>
<organism>
    <name type="scientific">Homo sapiens</name>
    <name type="common">Human</name>
    <dbReference type="NCBI Taxonomy" id="9606"/>
    <lineage>
        <taxon>Eukaryota</taxon>
        <taxon>Metazoa</taxon>
        <taxon>Chordata</taxon>
        <taxon>Craniata</taxon>
        <taxon>Vertebrata</taxon>
        <taxon>Euteleostomi</taxon>
        <taxon>Mammalia</taxon>
        <taxon>Eutheria</taxon>
        <taxon>Euarchontoglires</taxon>
        <taxon>Primates</taxon>
        <taxon>Haplorrhini</taxon>
        <taxon>Catarrhini</taxon>
        <taxon>Hominidae</taxon>
        <taxon>Homo</taxon>
    </lineage>
</organism>
<proteinExistence type="evidence at protein level"/>
<gene>
    <name type="primary">EEF1D</name>
    <name type="synonym">EF1D</name>
</gene>
<protein>
    <recommendedName>
        <fullName>Elongation factor 1-delta</fullName>
        <shortName>EF-1-delta</shortName>
    </recommendedName>
    <alternativeName>
        <fullName>Antigen NY-CO-4</fullName>
    </alternativeName>
</protein>
<sequence>MATNFLAHEKIWFDKFKYDDAERRFYEQMNGPVAGASRQENGASVILRDIARARENIQKSLAGSSGPGASSGTSGDHGELVVRIASLEVENQSLRGVVQELQQAISKLEARLNVLEKSSPGHRATAPQTQHVSPMRQVEPPAKKPATPAEDDEDDDIDLFGSDNEEEDKEAAQLREERLRQYAEKKAKKPALVAKSSILLDVKPWDDETDMAQLEACVRSIQLDGLVWGASKLVPVGYGIRKLQIQCVVEDDKVGTDLLEEEITKFEEHVQSVDIAAFNKI</sequence>
<dbReference type="EMBL" id="Z21507">
    <property type="protein sequence ID" value="CAA79716.1"/>
    <property type="molecule type" value="mRNA"/>
</dbReference>
<dbReference type="EMBL" id="BT007242">
    <property type="protein sequence ID" value="AAP35906.1"/>
    <property type="molecule type" value="mRNA"/>
</dbReference>
<dbReference type="EMBL" id="AK293339">
    <property type="protein sequence ID" value="BAG56855.1"/>
    <property type="molecule type" value="mRNA"/>
</dbReference>
<dbReference type="EMBL" id="AC067930">
    <property type="status" value="NOT_ANNOTATED_CDS"/>
    <property type="molecule type" value="Genomic_DNA"/>
</dbReference>
<dbReference type="EMBL" id="CH471162">
    <property type="protein sequence ID" value="EAW82227.1"/>
    <property type="molecule type" value="Genomic_DNA"/>
</dbReference>
<dbReference type="EMBL" id="CH471162">
    <property type="protein sequence ID" value="EAW82228.1"/>
    <property type="molecule type" value="Genomic_DNA"/>
</dbReference>
<dbReference type="EMBL" id="CH471162">
    <property type="protein sequence ID" value="EAW82229.1"/>
    <property type="molecule type" value="Genomic_DNA"/>
</dbReference>
<dbReference type="EMBL" id="CH471162">
    <property type="protein sequence ID" value="EAW82230.1"/>
    <property type="molecule type" value="Genomic_DNA"/>
</dbReference>
<dbReference type="EMBL" id="CH471162">
    <property type="protein sequence ID" value="EAW82232.1"/>
    <property type="molecule type" value="Genomic_DNA"/>
</dbReference>
<dbReference type="EMBL" id="BC007847">
    <property type="protein sequence ID" value="AAH07847.1"/>
    <property type="molecule type" value="mRNA"/>
</dbReference>
<dbReference type="EMBL" id="BC009907">
    <property type="protein sequence ID" value="AAH09907.1"/>
    <property type="molecule type" value="mRNA"/>
</dbReference>
<dbReference type="EMBL" id="BC012819">
    <property type="protein sequence ID" value="AAH12819.1"/>
    <property type="molecule type" value="mRNA"/>
</dbReference>
<dbReference type="EMBL" id="BC062535">
    <property type="protein sequence ID" value="AAH62535.1"/>
    <property type="molecule type" value="mRNA"/>
</dbReference>
<dbReference type="EMBL" id="BC094806">
    <property type="protein sequence ID" value="AAH94806.1"/>
    <property type="molecule type" value="mRNA"/>
</dbReference>
<dbReference type="CCDS" id="CCDS47930.1">
    <molecule id="P29692-3"/>
</dbReference>
<dbReference type="CCDS" id="CCDS56559.1">
    <molecule id="P29692-4"/>
</dbReference>
<dbReference type="CCDS" id="CCDS6404.1">
    <molecule id="P29692-2"/>
</dbReference>
<dbReference type="CCDS" id="CCDS6405.1">
    <molecule id="P29692-1"/>
</dbReference>
<dbReference type="PIR" id="S34626">
    <property type="entry name" value="S34626"/>
</dbReference>
<dbReference type="RefSeq" id="NP_001123525.3">
    <molecule id="P29692-2"/>
    <property type="nucleotide sequence ID" value="NM_001130053.5"/>
</dbReference>
<dbReference type="RefSeq" id="NP_001123527.1">
    <molecule id="P29692-1"/>
    <property type="nucleotide sequence ID" value="NM_001130055.4"/>
</dbReference>
<dbReference type="RefSeq" id="NP_001123528.1">
    <molecule id="P29692-3"/>
    <property type="nucleotide sequence ID" value="NM_001130056.5"/>
</dbReference>
<dbReference type="RefSeq" id="NP_001123529.1">
    <molecule id="P29692-1"/>
    <property type="nucleotide sequence ID" value="NM_001130057.4"/>
</dbReference>
<dbReference type="RefSeq" id="NP_001182132.1">
    <molecule id="P29692-4"/>
    <property type="nucleotide sequence ID" value="NM_001195203.4"/>
</dbReference>
<dbReference type="RefSeq" id="NP_001276879.1">
    <molecule id="P29692-1"/>
    <property type="nucleotide sequence ID" value="NM_001289950.4"/>
</dbReference>
<dbReference type="RefSeq" id="NP_001304672.1">
    <molecule id="P29692-3"/>
    <property type="nucleotide sequence ID" value="NM_001317743.4"/>
</dbReference>
<dbReference type="RefSeq" id="NP_001317575.1">
    <molecule id="P29692-3"/>
    <property type="nucleotide sequence ID" value="NM_001330646.3"/>
</dbReference>
<dbReference type="RefSeq" id="NP_001951.2">
    <molecule id="P29692-1"/>
    <property type="nucleotide sequence ID" value="NM_001960.5"/>
</dbReference>
<dbReference type="RefSeq" id="NP_115754.3">
    <molecule id="P29692-2"/>
    <property type="nucleotide sequence ID" value="NM_032378.5"/>
</dbReference>
<dbReference type="RefSeq" id="XP_005250880.1">
    <molecule id="P29692-2"/>
    <property type="nucleotide sequence ID" value="XM_005250823.1"/>
</dbReference>
<dbReference type="RefSeq" id="XP_006716585.1">
    <molecule id="P29692-2"/>
    <property type="nucleotide sequence ID" value="XM_006716522.2"/>
</dbReference>
<dbReference type="RefSeq" id="XP_006716586.1">
    <property type="nucleotide sequence ID" value="XM_006716523.1"/>
</dbReference>
<dbReference type="RefSeq" id="XP_006716587.1">
    <molecule id="P29692-2"/>
    <property type="nucleotide sequence ID" value="XM_006716524.2"/>
</dbReference>
<dbReference type="RefSeq" id="XP_006716588.1">
    <molecule id="P29692-1"/>
    <property type="nucleotide sequence ID" value="XM_006716525.2"/>
</dbReference>
<dbReference type="RefSeq" id="XP_011515207.1">
    <property type="nucleotide sequence ID" value="XM_011516905.2"/>
</dbReference>
<dbReference type="RefSeq" id="XP_011515208.1">
    <property type="nucleotide sequence ID" value="XM_011516906.2"/>
</dbReference>
<dbReference type="RefSeq" id="XP_016868659.1">
    <property type="nucleotide sequence ID" value="XM_017013170.1"/>
</dbReference>
<dbReference type="RefSeq" id="XP_047277382.1">
    <molecule id="P29692-2"/>
    <property type="nucleotide sequence ID" value="XM_047421426.1"/>
</dbReference>
<dbReference type="RefSeq" id="XP_047277383.1">
    <molecule id="P29692-2"/>
    <property type="nucleotide sequence ID" value="XM_047421427.1"/>
</dbReference>
<dbReference type="RefSeq" id="XP_047277384.1">
    <molecule id="P29692-2"/>
    <property type="nucleotide sequence ID" value="XM_047421428.1"/>
</dbReference>
<dbReference type="RefSeq" id="XP_047277385.1">
    <molecule id="P29692-2"/>
    <property type="nucleotide sequence ID" value="XM_047421429.1"/>
</dbReference>
<dbReference type="RefSeq" id="XP_047277386.1">
    <molecule id="P29692-2"/>
    <property type="nucleotide sequence ID" value="XM_047421430.1"/>
</dbReference>
<dbReference type="RefSeq" id="XP_047277387.1">
    <molecule id="P29692-2"/>
    <property type="nucleotide sequence ID" value="XM_047421431.1"/>
</dbReference>
<dbReference type="RefSeq" id="XP_047277388.1">
    <molecule id="P29692-2"/>
    <property type="nucleotide sequence ID" value="XM_047421432.1"/>
</dbReference>
<dbReference type="RefSeq" id="XP_047277389.1">
    <molecule id="P29692-2"/>
    <property type="nucleotide sequence ID" value="XM_047421433.1"/>
</dbReference>
<dbReference type="RefSeq" id="XP_047277390.1">
    <molecule id="P29692-2"/>
    <property type="nucleotide sequence ID" value="XM_047421434.1"/>
</dbReference>
<dbReference type="RefSeq" id="XP_047277391.1">
    <molecule id="P29692-2"/>
    <property type="nucleotide sequence ID" value="XM_047421435.1"/>
</dbReference>
<dbReference type="RefSeq" id="XP_047277392.1">
    <molecule id="P29692-2"/>
    <property type="nucleotide sequence ID" value="XM_047421436.1"/>
</dbReference>
<dbReference type="RefSeq" id="XP_047277393.1">
    <molecule id="P29692-2"/>
    <property type="nucleotide sequence ID" value="XM_047421437.1"/>
</dbReference>
<dbReference type="RefSeq" id="XP_047277394.1">
    <molecule id="P29692-2"/>
    <property type="nucleotide sequence ID" value="XM_047421438.1"/>
</dbReference>
<dbReference type="RefSeq" id="XP_047277395.1">
    <molecule id="P29692-2"/>
    <property type="nucleotide sequence ID" value="XM_047421439.1"/>
</dbReference>
<dbReference type="RefSeq" id="XP_047277396.1">
    <molecule id="P29692-2"/>
    <property type="nucleotide sequence ID" value="XM_047421440.1"/>
</dbReference>
<dbReference type="RefSeq" id="XP_047277397.1">
    <molecule id="P29692-2"/>
    <property type="nucleotide sequence ID" value="XM_047421441.1"/>
</dbReference>
<dbReference type="RefSeq" id="XP_047277398.1">
    <molecule id="P29692-2"/>
    <property type="nucleotide sequence ID" value="XM_047421442.1"/>
</dbReference>
<dbReference type="RefSeq" id="XP_054184697.1">
    <molecule id="P29692-2"/>
    <property type="nucleotide sequence ID" value="XM_054328722.1"/>
</dbReference>
<dbReference type="RefSeq" id="XP_054184698.1">
    <molecule id="P29692-2"/>
    <property type="nucleotide sequence ID" value="XM_054328723.1"/>
</dbReference>
<dbReference type="RefSeq" id="XP_054184699.1">
    <molecule id="P29692-2"/>
    <property type="nucleotide sequence ID" value="XM_054328724.1"/>
</dbReference>
<dbReference type="RefSeq" id="XP_054184700.1">
    <molecule id="P29692-2"/>
    <property type="nucleotide sequence ID" value="XM_054328725.1"/>
</dbReference>
<dbReference type="RefSeq" id="XP_054184701.1">
    <molecule id="P29692-2"/>
    <property type="nucleotide sequence ID" value="XM_054328726.1"/>
</dbReference>
<dbReference type="RefSeq" id="XP_054184702.1">
    <molecule id="P29692-2"/>
    <property type="nucleotide sequence ID" value="XM_054328727.1"/>
</dbReference>
<dbReference type="RefSeq" id="XP_054184703.1">
    <molecule id="P29692-2"/>
    <property type="nucleotide sequence ID" value="XM_054328728.1"/>
</dbReference>
<dbReference type="RefSeq" id="XP_054184704.1">
    <molecule id="P29692-2"/>
    <property type="nucleotide sequence ID" value="XM_054328729.1"/>
</dbReference>
<dbReference type="RefSeq" id="XP_054184705.1">
    <molecule id="P29692-2"/>
    <property type="nucleotide sequence ID" value="XM_054328730.1"/>
</dbReference>
<dbReference type="RefSeq" id="XP_054184706.1">
    <molecule id="P29692-2"/>
    <property type="nucleotide sequence ID" value="XM_054328731.1"/>
</dbReference>
<dbReference type="RefSeq" id="XP_054184707.1">
    <molecule id="P29692-2"/>
    <property type="nucleotide sequence ID" value="XM_054328732.1"/>
</dbReference>
<dbReference type="RefSeq" id="XP_054184708.1">
    <molecule id="P29692-2"/>
    <property type="nucleotide sequence ID" value="XM_054328733.1"/>
</dbReference>
<dbReference type="RefSeq" id="XP_054184709.1">
    <molecule id="P29692-2"/>
    <property type="nucleotide sequence ID" value="XM_054328734.1"/>
</dbReference>
<dbReference type="RefSeq" id="XP_054184710.1">
    <molecule id="P29692-2"/>
    <property type="nucleotide sequence ID" value="XM_054328735.1"/>
</dbReference>
<dbReference type="RefSeq" id="XP_054184723.1">
    <molecule id="P29692-1"/>
    <property type="nucleotide sequence ID" value="XM_054328748.1"/>
</dbReference>
<dbReference type="RefSeq" id="XP_054215920.1">
    <molecule id="P29692-1"/>
    <property type="nucleotide sequence ID" value="XM_054359945.1"/>
</dbReference>
<dbReference type="PDB" id="2MVM">
    <property type="method" value="NMR"/>
    <property type="chains" value="A=153-192"/>
</dbReference>
<dbReference type="PDB" id="2MVN">
    <property type="method" value="NMR"/>
    <property type="chains" value="A=153-192"/>
</dbReference>
<dbReference type="PDB" id="2N51">
    <property type="method" value="NMR"/>
    <property type="chains" value="A=153-281"/>
</dbReference>
<dbReference type="PDB" id="5JPO">
    <property type="method" value="X-ray"/>
    <property type="resolution" value="2.00 A"/>
    <property type="chains" value="E=1-30"/>
</dbReference>
<dbReference type="PDBsum" id="2MVM"/>
<dbReference type="PDBsum" id="2MVN"/>
<dbReference type="PDBsum" id="2N51"/>
<dbReference type="PDBsum" id="5JPO"/>
<dbReference type="BMRB" id="P29692"/>
<dbReference type="SMR" id="P29692"/>
<dbReference type="BioGRID" id="108256">
    <property type="interactions" value="350"/>
</dbReference>
<dbReference type="FunCoup" id="P29692">
    <property type="interactions" value="2195"/>
</dbReference>
<dbReference type="IntAct" id="P29692">
    <property type="interactions" value="179"/>
</dbReference>
<dbReference type="MINT" id="P29692"/>
<dbReference type="STRING" id="9606.ENSP00000410059"/>
<dbReference type="ChEMBL" id="CHEMBL4295739"/>
<dbReference type="GlyGen" id="P29692">
    <property type="glycosylation" value="1 site, 1 O-linked glycan (1 site)"/>
</dbReference>
<dbReference type="iPTMnet" id="P29692"/>
<dbReference type="MetOSite" id="P29692"/>
<dbReference type="PhosphoSitePlus" id="P29692"/>
<dbReference type="SwissPalm" id="P29692"/>
<dbReference type="BioMuta" id="EEF1D"/>
<dbReference type="DMDM" id="20141357"/>
<dbReference type="OGP" id="P29692"/>
<dbReference type="CPTAC" id="CPTAC-500"/>
<dbReference type="CPTAC" id="CPTAC-501"/>
<dbReference type="jPOST" id="P29692"/>
<dbReference type="MassIVE" id="P29692"/>
<dbReference type="PaxDb" id="9606-ENSP00000410059"/>
<dbReference type="PeptideAtlas" id="P29692"/>
<dbReference type="PRIDE" id="P29692"/>
<dbReference type="ProteomicsDB" id="19276"/>
<dbReference type="ProteomicsDB" id="54603">
    <molecule id="P29692-1"/>
</dbReference>
<dbReference type="ProteomicsDB" id="54604">
    <molecule id="P29692-2"/>
</dbReference>
<dbReference type="ProteomicsDB" id="54605">
    <molecule id="P29692-3"/>
</dbReference>
<dbReference type="Pumba" id="P29692"/>
<dbReference type="TopDownProteomics" id="P29692-1">
    <molecule id="P29692-1"/>
</dbReference>
<dbReference type="TopDownProteomics" id="P29692-3">
    <molecule id="P29692-3"/>
</dbReference>
<dbReference type="TopDownProteomics" id="P29692-4">
    <molecule id="P29692-4"/>
</dbReference>
<dbReference type="Antibodypedia" id="27948">
    <property type="antibodies" value="340 antibodies from 30 providers"/>
</dbReference>
<dbReference type="DNASU" id="1936"/>
<dbReference type="Ensembl" id="ENST00000317198.10">
    <molecule id="P29692-1"/>
    <property type="protein sequence ID" value="ENSP00000317399.6"/>
    <property type="gene ID" value="ENSG00000104529.19"/>
</dbReference>
<dbReference type="Ensembl" id="ENST00000395119.7">
    <molecule id="P29692-1"/>
    <property type="protein sequence ID" value="ENSP00000378551.3"/>
    <property type="gene ID" value="ENSG00000104529.19"/>
</dbReference>
<dbReference type="Ensembl" id="ENST00000419152.7">
    <molecule id="P29692-1"/>
    <property type="protein sequence ID" value="ENSP00000388261.2"/>
    <property type="gene ID" value="ENSG00000104529.19"/>
</dbReference>
<dbReference type="Ensembl" id="ENST00000442189.6">
    <molecule id="P29692-2"/>
    <property type="protein sequence ID" value="ENSP00000391944.2"/>
    <property type="gene ID" value="ENSG00000104529.19"/>
</dbReference>
<dbReference type="Ensembl" id="ENST00000524624.5">
    <molecule id="P29692-3"/>
    <property type="protein sequence ID" value="ENSP00000435697.1"/>
    <property type="gene ID" value="ENSG00000104529.19"/>
</dbReference>
<dbReference type="Ensembl" id="ENST00000526838.5">
    <molecule id="P29692-4"/>
    <property type="protein sequence ID" value="ENSP00000436507.1"/>
    <property type="gene ID" value="ENSG00000104529.19"/>
</dbReference>
<dbReference type="Ensembl" id="ENST00000528610.5">
    <molecule id="P29692-3"/>
    <property type="protein sequence ID" value="ENSP00000431763.1"/>
    <property type="gene ID" value="ENSG00000104529.19"/>
</dbReference>
<dbReference type="Ensembl" id="ENST00000529272.5">
    <molecule id="P29692-1"/>
    <property type="protein sequence ID" value="ENSP00000434872.1"/>
    <property type="gene ID" value="ENSG00000104529.19"/>
</dbReference>
<dbReference type="Ensembl" id="ENST00000529516.6">
    <molecule id="P29692-4"/>
    <property type="protein sequence ID" value="ENSP00000431742.2"/>
    <property type="gene ID" value="ENSG00000104529.19"/>
</dbReference>
<dbReference type="Ensembl" id="ENST00000530191.6">
    <molecule id="P29692-1"/>
    <property type="protein sequence ID" value="ENSP00000436542.2"/>
    <property type="gene ID" value="ENSG00000104529.19"/>
</dbReference>
<dbReference type="Ensembl" id="ENST00000530445.6">
    <molecule id="P29692-1"/>
    <property type="protein sequence ID" value="ENSP00000436933.2"/>
    <property type="gene ID" value="ENSG00000104529.19"/>
</dbReference>
<dbReference type="Ensembl" id="ENST00000531218.6">
    <molecule id="P29692-1"/>
    <property type="protein sequence ID" value="ENSP00000434448.2"/>
    <property type="gene ID" value="ENSG00000104529.19"/>
</dbReference>
<dbReference type="Ensembl" id="ENST00000533494.6">
    <molecule id="P29692-1"/>
    <property type="protein sequence ID" value="ENSP00000433412.2"/>
    <property type="gene ID" value="ENSG00000104529.19"/>
</dbReference>
<dbReference type="Ensembl" id="ENST00000534377.6">
    <molecule id="P29692-3"/>
    <property type="protein sequence ID" value="ENSP00000431460.2"/>
    <property type="gene ID" value="ENSG00000104529.19"/>
</dbReference>
<dbReference type="Ensembl" id="ENST00000534380.6">
    <molecule id="P29692-1"/>
    <property type="protein sequence ID" value="ENSP00000433611.2"/>
    <property type="gene ID" value="ENSG00000104529.19"/>
</dbReference>
<dbReference type="Ensembl" id="ENST00000614575.4">
    <molecule id="P29692-1"/>
    <property type="protein sequence ID" value="ENSP00000478340.2"/>
    <property type="gene ID" value="ENSG00000273594.4"/>
</dbReference>
<dbReference type="Ensembl" id="ENST00000615067.4">
    <molecule id="P29692-1"/>
    <property type="protein sequence ID" value="ENSP00000479653.1"/>
    <property type="gene ID" value="ENSG00000273594.4"/>
</dbReference>
<dbReference type="Ensembl" id="ENST00000615698.4">
    <molecule id="P29692-1"/>
    <property type="protein sequence ID" value="ENSP00000483527.1"/>
    <property type="gene ID" value="ENSG00000273594.4"/>
</dbReference>
<dbReference type="Ensembl" id="ENST00000618139.4">
    <molecule id="P29692-2"/>
    <property type="protein sequence ID" value="ENSP00000484536.2"/>
    <property type="gene ID" value="ENSG00000104529.19"/>
</dbReference>
<dbReference type="Ensembl" id="ENST00000619144.4">
    <molecule id="P29692-2"/>
    <property type="protein sequence ID" value="ENSP00000477608.1"/>
    <property type="gene ID" value="ENSG00000273594.4"/>
</dbReference>
<dbReference type="Ensembl" id="ENST00000620155.3">
    <molecule id="P29692-2"/>
    <property type="protein sequence ID" value="ENSP00000480505.1"/>
    <property type="gene ID" value="ENSG00000273594.4"/>
</dbReference>
<dbReference type="Ensembl" id="ENST00000631698.1">
    <molecule id="P29692-4"/>
    <property type="protein sequence ID" value="ENSP00000488672.1"/>
    <property type="gene ID" value="ENSG00000273594.4"/>
</dbReference>
<dbReference type="Ensembl" id="ENST00000632587.1">
    <molecule id="P29692-1"/>
    <property type="protein sequence ID" value="ENSP00000487680.1"/>
    <property type="gene ID" value="ENSG00000273594.4"/>
</dbReference>
<dbReference type="Ensembl" id="ENST00000632675.1">
    <molecule id="P29692-3"/>
    <property type="protein sequence ID" value="ENSP00000488026.1"/>
    <property type="gene ID" value="ENSG00000273594.4"/>
</dbReference>
<dbReference type="Ensembl" id="ENST00000632965.1">
    <molecule id="P29692-3"/>
    <property type="protein sequence ID" value="ENSP00000488275.1"/>
    <property type="gene ID" value="ENSG00000273594.4"/>
</dbReference>
<dbReference type="GeneID" id="1936"/>
<dbReference type="KEGG" id="hsa:1936"/>
<dbReference type="MANE-Select" id="ENST00000618139.4">
    <molecule id="P29692-2"/>
    <property type="protein sequence ID" value="ENSP00000484536.2"/>
    <property type="RefSeq nucleotide sequence ID" value="NM_001130053.5"/>
    <property type="RefSeq protein sequence ID" value="NP_001123525.3"/>
</dbReference>
<dbReference type="UCSC" id="uc003yyr.4">
    <molecule id="P29692-1"/>
    <property type="organism name" value="human"/>
</dbReference>
<dbReference type="AGR" id="HGNC:3211"/>
<dbReference type="CTD" id="1936"/>
<dbReference type="DisGeNET" id="1936"/>
<dbReference type="GeneCards" id="EEF1D"/>
<dbReference type="HGNC" id="HGNC:3211">
    <property type="gene designation" value="EEF1D"/>
</dbReference>
<dbReference type="HPA" id="ENSG00000104529">
    <property type="expression patterns" value="Low tissue specificity"/>
</dbReference>
<dbReference type="MalaCards" id="EEF1D"/>
<dbReference type="MIM" id="130592">
    <property type="type" value="gene"/>
</dbReference>
<dbReference type="neXtProt" id="NX_P29692"/>
<dbReference type="OpenTargets" id="ENSG00000104529"/>
<dbReference type="PharmGKB" id="PA27647"/>
<dbReference type="VEuPathDB" id="HostDB:ENSG00000104529"/>
<dbReference type="eggNOG" id="KOG1668">
    <property type="taxonomic scope" value="Eukaryota"/>
</dbReference>
<dbReference type="GeneTree" id="ENSGT00950000183014"/>
<dbReference type="HOGENOM" id="CLU_020166_0_0_1"/>
<dbReference type="InParanoid" id="P29692"/>
<dbReference type="OMA" id="RVWLDKP"/>
<dbReference type="OrthoDB" id="9448341at2759"/>
<dbReference type="PAN-GO" id="P29692">
    <property type="GO annotations" value="3 GO annotations based on evolutionary models"/>
</dbReference>
<dbReference type="PhylomeDB" id="P29692"/>
<dbReference type="TreeFam" id="TF313134"/>
<dbReference type="PathwayCommons" id="P29692"/>
<dbReference type="Reactome" id="R-HSA-156842">
    <property type="pathway name" value="Eukaryotic Translation Elongation"/>
</dbReference>
<dbReference type="SignaLink" id="P29692"/>
<dbReference type="SIGNOR" id="P29692"/>
<dbReference type="BioGRID-ORCS" id="1936">
    <property type="hits" value="13 hits in 1157 CRISPR screens"/>
</dbReference>
<dbReference type="CD-CODE" id="91857CE7">
    <property type="entry name" value="Nucleolus"/>
</dbReference>
<dbReference type="CD-CODE" id="FB4E32DD">
    <property type="entry name" value="Presynaptic clusters and postsynaptic densities"/>
</dbReference>
<dbReference type="ChiTaRS" id="EEF1D">
    <property type="organism name" value="human"/>
</dbReference>
<dbReference type="EvolutionaryTrace" id="P29692"/>
<dbReference type="GeneWiki" id="EEF1D"/>
<dbReference type="GenomeRNAi" id="1936"/>
<dbReference type="Pharos" id="P29692">
    <property type="development level" value="Tbio"/>
</dbReference>
<dbReference type="PRO" id="PR:P29692"/>
<dbReference type="Proteomes" id="UP000005640">
    <property type="component" value="Chromosome 8"/>
</dbReference>
<dbReference type="RNAct" id="P29692">
    <property type="molecule type" value="protein"/>
</dbReference>
<dbReference type="Bgee" id="ENSG00000104529">
    <property type="expression patterns" value="Expressed in calcaneal tendon and 97 other cell types or tissues"/>
</dbReference>
<dbReference type="ExpressionAtlas" id="P29692">
    <property type="expression patterns" value="baseline and differential"/>
</dbReference>
<dbReference type="GO" id="GO:0005737">
    <property type="term" value="C:cytoplasm"/>
    <property type="evidence" value="ECO:0000314"/>
    <property type="project" value="UniProtKB"/>
</dbReference>
<dbReference type="GO" id="GO:0005829">
    <property type="term" value="C:cytosol"/>
    <property type="evidence" value="ECO:0000314"/>
    <property type="project" value="HPA"/>
</dbReference>
<dbReference type="GO" id="GO:0005853">
    <property type="term" value="C:eukaryotic translation elongation factor 1 complex"/>
    <property type="evidence" value="ECO:0000304"/>
    <property type="project" value="ProtInc"/>
</dbReference>
<dbReference type="GO" id="GO:0001650">
    <property type="term" value="C:fibrillar center"/>
    <property type="evidence" value="ECO:0000314"/>
    <property type="project" value="HPA"/>
</dbReference>
<dbReference type="GO" id="GO:0005654">
    <property type="term" value="C:nucleoplasm"/>
    <property type="evidence" value="ECO:0000314"/>
    <property type="project" value="HPA"/>
</dbReference>
<dbReference type="GO" id="GO:0005634">
    <property type="term" value="C:nucleus"/>
    <property type="evidence" value="ECO:0007005"/>
    <property type="project" value="UniProtKB"/>
</dbReference>
<dbReference type="GO" id="GO:0045296">
    <property type="term" value="F:cadherin binding"/>
    <property type="evidence" value="ECO:0007005"/>
    <property type="project" value="BHF-UCL"/>
</dbReference>
<dbReference type="GO" id="GO:0003677">
    <property type="term" value="F:DNA binding"/>
    <property type="evidence" value="ECO:0007669"/>
    <property type="project" value="UniProtKB-KW"/>
</dbReference>
<dbReference type="GO" id="GO:0140297">
    <property type="term" value="F:DNA-binding transcription factor binding"/>
    <property type="evidence" value="ECO:0000353"/>
    <property type="project" value="UniProtKB"/>
</dbReference>
<dbReference type="GO" id="GO:0005085">
    <property type="term" value="F:guanyl-nucleotide exchange factor activity"/>
    <property type="evidence" value="ECO:0000318"/>
    <property type="project" value="GO_Central"/>
</dbReference>
<dbReference type="GO" id="GO:0031072">
    <property type="term" value="F:heat shock protein binding"/>
    <property type="evidence" value="ECO:0000353"/>
    <property type="project" value="UniProtKB"/>
</dbReference>
<dbReference type="GO" id="GO:0000978">
    <property type="term" value="F:RNA polymerase II cis-regulatory region sequence-specific DNA binding"/>
    <property type="evidence" value="ECO:0000314"/>
    <property type="project" value="UniProtKB"/>
</dbReference>
<dbReference type="GO" id="GO:0003746">
    <property type="term" value="F:translation elongation factor activity"/>
    <property type="evidence" value="ECO:0007669"/>
    <property type="project" value="UniProtKB-KW"/>
</dbReference>
<dbReference type="GO" id="GO:0008135">
    <property type="term" value="F:translation factor activity, RNA binding"/>
    <property type="evidence" value="ECO:0000304"/>
    <property type="project" value="ProtInc"/>
</dbReference>
<dbReference type="GO" id="GO:0034605">
    <property type="term" value="P:cellular response to heat"/>
    <property type="evidence" value="ECO:0000315"/>
    <property type="project" value="UniProtKB"/>
</dbReference>
<dbReference type="GO" id="GO:0071479">
    <property type="term" value="P:cellular response to ionizing radiation"/>
    <property type="evidence" value="ECO:0000314"/>
    <property type="project" value="UniProtKB"/>
</dbReference>
<dbReference type="GO" id="GO:0002182">
    <property type="term" value="P:cytoplasmic translational elongation"/>
    <property type="evidence" value="ECO:0000303"/>
    <property type="project" value="UniProtKB"/>
</dbReference>
<dbReference type="GO" id="GO:0045944">
    <property type="term" value="P:positive regulation of transcription by RNA polymerase II"/>
    <property type="evidence" value="ECO:0000314"/>
    <property type="project" value="UniProtKB"/>
</dbReference>
<dbReference type="GO" id="GO:0006414">
    <property type="term" value="P:translational elongation"/>
    <property type="evidence" value="ECO:0000318"/>
    <property type="project" value="GO_Central"/>
</dbReference>
<dbReference type="CDD" id="cd00292">
    <property type="entry name" value="EF1B"/>
    <property type="match status" value="1"/>
</dbReference>
<dbReference type="FunFam" id="3.30.70.60:FF:000001">
    <property type="entry name" value="Elongation factor 1-beta 1 like"/>
    <property type="match status" value="1"/>
</dbReference>
<dbReference type="Gene3D" id="3.30.70.60">
    <property type="match status" value="1"/>
</dbReference>
<dbReference type="InterPro" id="IPR036219">
    <property type="entry name" value="eEF-1beta-like_sf"/>
</dbReference>
<dbReference type="InterPro" id="IPR018940">
    <property type="entry name" value="EF-1_beta_acid_region_euk"/>
</dbReference>
<dbReference type="InterPro" id="IPR049720">
    <property type="entry name" value="EF1B_bsu/dsu"/>
</dbReference>
<dbReference type="InterPro" id="IPR014038">
    <property type="entry name" value="EF1B_bsu/dsu_GNE"/>
</dbReference>
<dbReference type="InterPro" id="IPR014717">
    <property type="entry name" value="Transl_elong_EF1B/ribsomal_bS6"/>
</dbReference>
<dbReference type="InterPro" id="IPR001326">
    <property type="entry name" value="Transl_elong_EF1B_B/D_CS"/>
</dbReference>
<dbReference type="PANTHER" id="PTHR11595">
    <property type="entry name" value="EF-HAND AND COILED-COIL DOMAIN-CONTAINING FAMILY MEMBER"/>
    <property type="match status" value="1"/>
</dbReference>
<dbReference type="PANTHER" id="PTHR11595:SF26">
    <property type="entry name" value="ELONGATION FACTOR 1-DELTA"/>
    <property type="match status" value="1"/>
</dbReference>
<dbReference type="Pfam" id="PF10587">
    <property type="entry name" value="EF-1_beta_acid"/>
    <property type="match status" value="1"/>
</dbReference>
<dbReference type="Pfam" id="PF00736">
    <property type="entry name" value="EF1_GNE"/>
    <property type="match status" value="1"/>
</dbReference>
<dbReference type="SMART" id="SM01182">
    <property type="entry name" value="EF-1_beta_acid"/>
    <property type="match status" value="1"/>
</dbReference>
<dbReference type="SMART" id="SM00888">
    <property type="entry name" value="EF1_GNE"/>
    <property type="match status" value="1"/>
</dbReference>
<dbReference type="SUPFAM" id="SSF54984">
    <property type="entry name" value="eEF-1beta-like"/>
    <property type="match status" value="1"/>
</dbReference>
<dbReference type="PROSITE" id="PS00824">
    <property type="entry name" value="EF1BD_1"/>
    <property type="match status" value="1"/>
</dbReference>
<dbReference type="PROSITE" id="PS00825">
    <property type="entry name" value="EF1BD_2"/>
    <property type="match status" value="1"/>
</dbReference>
<keyword id="KW-0002">3D-structure</keyword>
<keyword id="KW-0007">Acetylation</keyword>
<keyword id="KW-0025">Alternative splicing</keyword>
<keyword id="KW-0903">Direct protein sequencing</keyword>
<keyword id="KW-0238">DNA-binding</keyword>
<keyword id="KW-0251">Elongation factor</keyword>
<keyword id="KW-0539">Nucleus</keyword>
<keyword id="KW-0597">Phosphoprotein</keyword>
<keyword id="KW-0648">Protein biosynthesis</keyword>
<keyword id="KW-1267">Proteomics identification</keyword>
<keyword id="KW-1185">Reference proteome</keyword>
<keyword id="KW-0804">Transcription</keyword>
<keyword id="KW-0805">Transcription regulation</keyword>
<evidence type="ECO:0000250" key="1">
    <source>
        <dbReference type="UniProtKB" id="P57776"/>
    </source>
</evidence>
<evidence type="ECO:0000250" key="2">
    <source>
        <dbReference type="UniProtKB" id="Q68FR9"/>
    </source>
</evidence>
<evidence type="ECO:0000256" key="3">
    <source>
        <dbReference type="SAM" id="MobiDB-lite"/>
    </source>
</evidence>
<evidence type="ECO:0000269" key="4">
    <source>
    </source>
</evidence>
<evidence type="ECO:0000269" key="5">
    <source>
    </source>
</evidence>
<evidence type="ECO:0000269" key="6">
    <source>
    </source>
</evidence>
<evidence type="ECO:0000269" key="7">
    <source>
    </source>
</evidence>
<evidence type="ECO:0000269" key="8">
    <source ref="9"/>
</evidence>
<evidence type="ECO:0000303" key="9">
    <source>
    </source>
</evidence>
<evidence type="ECO:0000303" key="10">
    <source>
    </source>
</evidence>
<evidence type="ECO:0000303" key="11">
    <source ref="3"/>
</evidence>
<evidence type="ECO:0000305" key="12"/>
<evidence type="ECO:0007744" key="13">
    <source>
    </source>
</evidence>
<evidence type="ECO:0007744" key="14">
    <source>
    </source>
</evidence>
<evidence type="ECO:0007744" key="15">
    <source>
    </source>
</evidence>
<evidence type="ECO:0007744" key="16">
    <source>
    </source>
</evidence>
<evidence type="ECO:0007744" key="17">
    <source>
    </source>
</evidence>
<evidence type="ECO:0007744" key="18">
    <source>
    </source>
</evidence>
<evidence type="ECO:0007744" key="19">
    <source>
    </source>
</evidence>
<evidence type="ECO:0007744" key="20">
    <source>
    </source>
</evidence>
<evidence type="ECO:0007744" key="21">
    <source>
    </source>
</evidence>
<evidence type="ECO:0007744" key="22">
    <source>
    </source>
</evidence>
<evidence type="ECO:0007744" key="23">
    <source>
    </source>
</evidence>
<evidence type="ECO:0007744" key="24">
    <source>
    </source>
</evidence>
<evidence type="ECO:0007744" key="25">
    <source>
    </source>
</evidence>
<evidence type="ECO:0007744" key="26">
    <source>
    </source>
</evidence>
<evidence type="ECO:0007744" key="27">
    <source>
    </source>
</evidence>
<evidence type="ECO:0007744" key="28">
    <source>
    </source>
</evidence>
<evidence type="ECO:0007744" key="29">
    <source>
    </source>
</evidence>
<evidence type="ECO:0007744" key="30">
    <source>
    </source>
</evidence>
<evidence type="ECO:0007744" key="31">
    <source>
    </source>
</evidence>
<evidence type="ECO:0007829" key="32">
    <source>
        <dbReference type="PDB" id="2MVM"/>
    </source>
</evidence>
<evidence type="ECO:0007829" key="33">
    <source>
        <dbReference type="PDB" id="2MVN"/>
    </source>
</evidence>
<evidence type="ECO:0007829" key="34">
    <source>
        <dbReference type="PDB" id="2N51"/>
    </source>
</evidence>
<evidence type="ECO:0007829" key="35">
    <source>
        <dbReference type="PDB" id="5JPO"/>
    </source>
</evidence>
<name>EF1D_HUMAN</name>
<comment type="function">
    <molecule>Isoform 1</molecule>
    <text>EF-1-beta and EF-1-delta stimulate the exchange of GDP bound to EF-1-alpha to GTP, regenerating EF-1-alpha for another round of transfer of aminoacyl-tRNAs to the ribosome.</text>
</comment>
<comment type="function">
    <molecule>Isoform 2</molecule>
    <text>Regulates induction of heat-shock-responsive genes through association with heat shock transcription factors and direct DNA-binding at heat shock promoter elements (HSE).</text>
</comment>
<comment type="subunit">
    <text>EF-1 is composed of 4 subunits: alpha, beta, delta isoform 1, and gamma. Isoform 2 interacts with HSF1 and NFE2L2.</text>
</comment>
<comment type="interaction">
    <interactant intactId="EBI-358607">
        <id>P29692</id>
    </interactant>
    <interactant intactId="EBI-7223971">
        <id>Q969K4</id>
        <label>ABTB1</label>
    </interactant>
    <organismsDiffer>false</organismsDiffer>
    <experiments>3</experiments>
</comment>
<comment type="interaction">
    <interactant intactId="EBI-358607">
        <id>P29692</id>
    </interactant>
    <interactant intactId="EBI-1642518">
        <id>Q5T5U3</id>
        <label>ARHGAP21</label>
    </interactant>
    <organismsDiffer>false</organismsDiffer>
    <experiments>2</experiments>
</comment>
<comment type="interaction">
    <interactant intactId="EBI-358607">
        <id>P29692</id>
    </interactant>
    <interactant intactId="EBI-987834">
        <id>O95352</id>
        <label>ATG7</label>
    </interactant>
    <organismsDiffer>false</organismsDiffer>
    <experiments>2</experiments>
</comment>
<comment type="interaction">
    <interactant intactId="EBI-358607">
        <id>P29692</id>
    </interactant>
    <interactant intactId="EBI-1051869">
        <id>Q08AD1</id>
        <label>CAMSAP2</label>
    </interactant>
    <organismsDiffer>false</organismsDiffer>
    <experiments>2</experiments>
</comment>
<comment type="interaction">
    <interactant intactId="EBI-358607">
        <id>P29692</id>
    </interactant>
    <interactant intactId="EBI-351467">
        <id>P26641</id>
        <label>EEF1G</label>
    </interactant>
    <organismsDiffer>false</organismsDiffer>
    <experiments>8</experiments>
</comment>
<comment type="interaction">
    <interactant intactId="EBI-358607">
        <id>P29692</id>
    </interactant>
    <interactant intactId="EBI-10177695">
        <id>P26641-2</id>
        <label>EEF1G</label>
    </interactant>
    <organismsDiffer>false</organismsDiffer>
    <experiments>3</experiments>
</comment>
<comment type="interaction">
    <interactant intactId="EBI-358607">
        <id>P29692</id>
    </interactant>
    <interactant intactId="EBI-953772">
        <id>Q96DN0</id>
        <label>ERP27</label>
    </interactant>
    <organismsDiffer>false</organismsDiffer>
    <experiments>5</experiments>
</comment>
<comment type="interaction">
    <interactant intactId="EBI-358607">
        <id>P29692</id>
    </interactant>
    <interactant intactId="EBI-466029">
        <id>P42858</id>
        <label>HTT</label>
    </interactant>
    <organismsDiffer>false</organismsDiffer>
    <experiments>6</experiments>
</comment>
<comment type="interaction">
    <interactant intactId="EBI-358607">
        <id>P29692</id>
    </interactant>
    <interactant intactId="EBI-751711">
        <id>P61244</id>
        <label>MAX</label>
    </interactant>
    <organismsDiffer>false</organismsDiffer>
    <experiments>2</experiments>
</comment>
<comment type="interaction">
    <interactant intactId="EBI-358607">
        <id>P29692</id>
    </interactant>
    <interactant intactId="EBI-747107">
        <id>Q8IUQ4</id>
        <label>SIAH1</label>
    </interactant>
    <organismsDiffer>false</organismsDiffer>
    <experiments>4</experiments>
</comment>
<comment type="interaction">
    <interactant intactId="EBI-358607">
        <id>P29692</id>
    </interactant>
    <interactant intactId="EBI-990792">
        <id>P00441</id>
        <label>SOD1</label>
    </interactant>
    <organismsDiffer>false</organismsDiffer>
    <experiments>3</experiments>
</comment>
<comment type="interaction">
    <interactant intactId="EBI-358607">
        <id>P29692</id>
    </interactant>
    <interactant intactId="EBI-1783169">
        <id>P13693</id>
        <label>TPT1</label>
    </interactant>
    <organismsDiffer>false</organismsDiffer>
    <experiments>3</experiments>
</comment>
<comment type="interaction">
    <interactant intactId="EBI-358607">
        <id>P29692</id>
    </interactant>
    <interactant intactId="EBI-11514477">
        <id>Q67020</id>
        <label>PA</label>
    </interactant>
    <organismsDiffer>true</organismsDiffer>
    <experiments>2</experiments>
</comment>
<comment type="interaction">
    <interactant intactId="EBI-5280572">
        <id>P29692-2</id>
    </interactant>
    <interactant intactId="EBI-7223971">
        <id>Q969K4</id>
        <label>ABTB1</label>
    </interactant>
    <organismsDiffer>false</organismsDiffer>
    <experiments>4</experiments>
</comment>
<comment type="interaction">
    <interactant intactId="EBI-5280572">
        <id>P29692-2</id>
    </interactant>
    <interactant intactId="EBI-11022349">
        <id>Q99996-3</id>
        <label>AKAP9</label>
    </interactant>
    <organismsDiffer>false</organismsDiffer>
    <experiments>3</experiments>
</comment>
<comment type="interaction">
    <interactant intactId="EBI-5280572">
        <id>P29692-2</id>
    </interactant>
    <interactant intactId="EBI-750671">
        <id>Q15699</id>
        <label>ALX1</label>
    </interactant>
    <organismsDiffer>false</organismsDiffer>
    <experiments>3</experiments>
</comment>
<comment type="interaction">
    <interactant intactId="EBI-5280572">
        <id>P29692-2</id>
    </interactant>
    <interactant intactId="EBI-21529239">
        <id>Q86TI2-2</id>
        <label>DPP9</label>
    </interactant>
    <organismsDiffer>false</organismsDiffer>
    <experiments>3</experiments>
</comment>
<comment type="interaction">
    <interactant intactId="EBI-5280572">
        <id>P29692-2</id>
    </interactant>
    <interactant intactId="EBI-351467">
        <id>P26641</id>
        <label>EEF1G</label>
    </interactant>
    <organismsDiffer>false</organismsDiffer>
    <experiments>4</experiments>
</comment>
<comment type="interaction">
    <interactant intactId="EBI-5280572">
        <id>P29692-2</id>
    </interactant>
    <interactant intactId="EBI-10177695">
        <id>P26641-2</id>
        <label>EEF1G</label>
    </interactant>
    <organismsDiffer>false</organismsDiffer>
    <experiments>3</experiments>
</comment>
<comment type="interaction">
    <interactant intactId="EBI-5280572">
        <id>P29692-2</id>
    </interactant>
    <interactant intactId="EBI-744771">
        <id>O75344</id>
        <label>FKBP6</label>
    </interactant>
    <organismsDiffer>false</organismsDiffer>
    <experiments>3</experiments>
</comment>
<comment type="interaction">
    <interactant intactId="EBI-5280572">
        <id>P29692-2</id>
    </interactant>
    <interactant intactId="EBI-723416">
        <id>Q15012</id>
        <label>LAPTM4A</label>
    </interactant>
    <organismsDiffer>false</organismsDiffer>
    <experiments>3</experiments>
</comment>
<comment type="interaction">
    <interactant intactId="EBI-5280572">
        <id>P29692-2</id>
    </interactant>
    <interactant intactId="EBI-6447163">
        <id>Q8N7X4</id>
        <label>MAGEB6</label>
    </interactant>
    <organismsDiffer>false</organismsDiffer>
    <experiments>3</experiments>
</comment>
<comment type="interaction">
    <interactant intactId="EBI-5280572">
        <id>P29692-2</id>
    </interactant>
    <interactant intactId="EBI-719403">
        <id>O95563</id>
        <label>MPC2</label>
    </interactant>
    <organismsDiffer>false</organismsDiffer>
    <experiments>3</experiments>
</comment>
<comment type="interaction">
    <interactant intactId="EBI-5280572">
        <id>P29692-2</id>
    </interactant>
    <interactant intactId="EBI-2557276">
        <id>O15534</id>
        <label>PER1</label>
    </interactant>
    <organismsDiffer>false</organismsDiffer>
    <experiments>3</experiments>
</comment>
<comment type="interaction">
    <interactant intactId="EBI-5280572">
        <id>P29692-2</id>
    </interactant>
    <interactant intactId="EBI-2339674">
        <id>Q5T6S3</id>
        <label>PHF19</label>
    </interactant>
    <organismsDiffer>false</organismsDiffer>
    <experiments>3</experiments>
</comment>
<comment type="interaction">
    <interactant intactId="EBI-5280572">
        <id>P29692-2</id>
    </interactant>
    <interactant intactId="EBI-8345366">
        <id>Q8TCT7-2</id>
        <label>SPPL2B</label>
    </interactant>
    <organismsDiffer>false</organismsDiffer>
    <experiments>3</experiments>
</comment>
<comment type="interaction">
    <interactant intactId="EBI-5280572">
        <id>P29692-2</id>
    </interactant>
    <interactant intactId="EBI-25842075">
        <id>P21980-2</id>
        <label>TGM2</label>
    </interactant>
    <organismsDiffer>false</organismsDiffer>
    <experiments>3</experiments>
</comment>
<comment type="interaction">
    <interactant intactId="EBI-5280572">
        <id>P29692-2</id>
    </interactant>
    <interactant intactId="EBI-1783169">
        <id>P13693</id>
        <label>TPT1</label>
    </interactant>
    <organismsDiffer>false</organismsDiffer>
    <experiments>3</experiments>
</comment>
<comment type="interaction">
    <interactant intactId="EBI-5280572">
        <id>P29692-2</id>
    </interactant>
    <interactant intactId="EBI-354022">
        <id>P45880</id>
        <label>VDAC2</label>
    </interactant>
    <organismsDiffer>false</organismsDiffer>
    <experiments>3</experiments>
</comment>
<comment type="interaction">
    <interactant intactId="EBI-5280572">
        <id>P29692-2</id>
    </interactant>
    <interactant intactId="EBI-347522">
        <id>O43257</id>
        <label>ZNHIT1</label>
    </interactant>
    <organismsDiffer>false</organismsDiffer>
    <experiments>3</experiments>
</comment>
<comment type="interaction">
    <interactant intactId="EBI-5280572">
        <id>P29692-2</id>
    </interactant>
    <interactant intactId="EBI-10259496">
        <id>Q86V28</id>
    </interactant>
    <organismsDiffer>false</organismsDiffer>
    <experiments>3</experiments>
</comment>
<comment type="subcellular location">
    <molecule>Isoform 2</molecule>
    <subcellularLocation>
        <location evidence="4">Nucleus</location>
    </subcellularLocation>
</comment>
<comment type="alternative products">
    <event type="alternative splicing"/>
    <isoform>
        <id>P29692-1</id>
        <name>1</name>
        <sequence type="displayed"/>
    </isoform>
    <isoform>
        <id>P29692-2</id>
        <name>2</name>
        <name>eEF1BdeltaL</name>
        <sequence type="described" ref="VSP_037884"/>
    </isoform>
    <isoform>
        <id>P29692-3</id>
        <name>3</name>
        <sequence type="described" ref="VSP_043812"/>
    </isoform>
    <isoform>
        <id>P29692-4</id>
        <name>4</name>
        <sequence type="described" ref="VSP_045960"/>
    </isoform>
</comment>
<comment type="tissue specificity">
    <text>Isoform 2 is specifically expressed in brain, cerebellum and testis.</text>
</comment>
<comment type="induction">
    <text evidence="6 7">By homocysteine (HC), may mediate accelerated synthesis of free thiol-containing proteins in response to HC-induced oxidative stress. Also induced following exposure to ionizing radiation.</text>
</comment>
<comment type="similarity">
    <text evidence="12">Belongs to the EF-1-beta/EF-1-delta family.</text>
</comment>
<feature type="initiator methionine" description="Removed" evidence="8 28 31">
    <location>
        <position position="1"/>
    </location>
</feature>
<feature type="chain" id="PRO_0000155046" description="Elongation factor 1-delta">
    <location>
        <begin position="2"/>
        <end position="281"/>
    </location>
</feature>
<feature type="region of interest" description="Leucine-zipper">
    <location>
        <begin position="80"/>
        <end position="115"/>
    </location>
</feature>
<feature type="region of interest" description="Disordered" evidence="3">
    <location>
        <begin position="118"/>
        <end position="172"/>
    </location>
</feature>
<feature type="region of interest" description="Catalytic (GEF)">
    <location>
        <begin position="173"/>
        <end position="281"/>
    </location>
</feature>
<feature type="compositionally biased region" description="Acidic residues" evidence="3">
    <location>
        <begin position="149"/>
        <end position="169"/>
    </location>
</feature>
<feature type="modified residue" description="N-acetylalanine" evidence="8 28 31">
    <location>
        <position position="2"/>
    </location>
</feature>
<feature type="modified residue" description="N6-acetyllysine" evidence="24">
    <location>
        <position position="17"/>
    </location>
</feature>
<feature type="modified residue" description="Phosphoserine" evidence="29">
    <location>
        <position position="37"/>
    </location>
</feature>
<feature type="modified residue" description="Phosphoserine" evidence="29">
    <location>
        <position position="44"/>
    </location>
</feature>
<feature type="modified residue" description="Phosphoserine" evidence="29 30">
    <location>
        <position position="60"/>
    </location>
</feature>
<feature type="modified residue" description="Phosphothreonine" evidence="30">
    <location>
        <position position="73"/>
    </location>
</feature>
<feature type="modified residue" description="Phosphoserine" evidence="29">
    <location>
        <position position="86"/>
    </location>
</feature>
<feature type="modified residue" description="Phosphoserine" evidence="2">
    <location>
        <position position="106"/>
    </location>
</feature>
<feature type="modified residue" description="N6-acetyllysine" evidence="24">
    <location>
        <position position="107"/>
    </location>
</feature>
<feature type="modified residue" description="N6-acetyllysine; alternate" evidence="24">
    <location>
        <position position="117"/>
    </location>
</feature>
<feature type="modified residue" description="N6-succinyllysine; alternate" evidence="1">
    <location>
        <position position="117"/>
    </location>
</feature>
<feature type="modified residue" description="Phosphoserine" evidence="29">
    <location>
        <position position="119"/>
    </location>
</feature>
<feature type="modified residue" description="Phosphothreonine" evidence="29 30">
    <location>
        <position position="129"/>
    </location>
</feature>
<feature type="modified residue" description="Phosphoserine" evidence="14 15 17 18 20 21 23 26 27 29 30">
    <location>
        <position position="133"/>
    </location>
</feature>
<feature type="modified residue" description="Phosphothreonine" evidence="14 21 25 29">
    <location>
        <position position="147"/>
    </location>
</feature>
<feature type="modified residue" description="Phosphoserine; by CK2" evidence="5 13 14 15 16 19 21 22 23 25 26 27 29 30">
    <location>
        <position position="162"/>
    </location>
</feature>
<feature type="splice variant" id="VSP_037884" description="In isoform 2." evidence="10 11">
    <original>M</original>
    <variation>MRSGKASCTLETVWEDKHKYEEAERRFYEHEATQAAASAQQLPAEGPAMNGPGQDDPEDADEAEAPDGGSRRDPRKSQDSRKPLQKKRKRSPKSGLGPADLALLGLSAERVWLDKSLFDQAESSYRQKLADVAAQAAWPPALAPWGLCTHGNQVACHHVTWGIWVNKSSFDQAERAFVEWSQALLLAPDGSRRQGTPNTGQQVAVPDLAHQPSPPVNGQPPLGSLQALVREVWLEKPRYDAAERGFYEALFDGHPPGKVRLQERAGLAEGARRGRRDRRGRNILGNKRAGLRRADGEAPSALPYCYFLQKDAEAPWLSKPAYDSAECRHHAAEALRVAWCLEAASLSHRPGPRSGLSVSSLRPNRKM</variation>
    <location>
        <position position="1"/>
    </location>
</feature>
<feature type="splice variant" id="VSP_043812" description="In isoform 3." evidence="10">
    <location>
        <begin position="40"/>
        <end position="63"/>
    </location>
</feature>
<feature type="splice variant" id="VSP_045960" description="In isoform 4." evidence="9">
    <location>
        <begin position="78"/>
        <end position="96"/>
    </location>
</feature>
<feature type="sequence conflict" description="In Ref. 1; CAA79716." evidence="12" ref="1">
    <original>A</original>
    <variation>R</variation>
    <location>
        <position position="34"/>
    </location>
</feature>
<feature type="sequence conflict" description="In Ref. 1; CAA79716." evidence="12" ref="1">
    <original>S</original>
    <variation>T</variation>
    <location>
        <position position="44"/>
    </location>
</feature>
<feature type="sequence conflict" description="In Ref. 4; BAG56855." evidence="12" ref="4">
    <original>T</original>
    <variation>A</variation>
    <location>
        <position position="209"/>
    </location>
</feature>
<feature type="helix" evidence="35">
    <location>
        <begin position="2"/>
        <end position="9"/>
    </location>
</feature>
<feature type="helix" evidence="35">
    <location>
        <begin position="15"/>
        <end position="27"/>
    </location>
</feature>
<feature type="strand" evidence="32">
    <location>
        <begin position="153"/>
        <end position="157"/>
    </location>
</feature>
<feature type="strand" evidence="32">
    <location>
        <begin position="159"/>
        <end position="161"/>
    </location>
</feature>
<feature type="strand" evidence="33">
    <location>
        <begin position="162"/>
        <end position="165"/>
    </location>
</feature>
<feature type="helix" evidence="32">
    <location>
        <begin position="169"/>
        <end position="185"/>
    </location>
</feature>
<feature type="turn" evidence="33">
    <location>
        <begin position="187"/>
        <end position="190"/>
    </location>
</feature>
<feature type="strand" evidence="34">
    <location>
        <begin position="195"/>
        <end position="206"/>
    </location>
</feature>
<feature type="helix" evidence="34">
    <location>
        <begin position="211"/>
        <end position="219"/>
    </location>
</feature>
<feature type="strand" evidence="34">
    <location>
        <begin position="226"/>
        <end position="235"/>
    </location>
</feature>
<feature type="strand" evidence="34">
    <location>
        <begin position="237"/>
        <end position="239"/>
    </location>
</feature>
<feature type="strand" evidence="34">
    <location>
        <begin position="241"/>
        <end position="250"/>
    </location>
</feature>
<feature type="turn" evidence="34">
    <location>
        <begin position="251"/>
        <end position="253"/>
    </location>
</feature>
<feature type="helix" evidence="34">
    <location>
        <begin position="256"/>
        <end position="265"/>
    </location>
</feature>
<feature type="helix" evidence="34">
    <location>
        <begin position="266"/>
        <end position="268"/>
    </location>
</feature>
<feature type="strand" evidence="34">
    <location>
        <begin position="270"/>
        <end position="280"/>
    </location>
</feature>
<feature type="modified residue" description="Phosphoserine" evidence="20">
    <location sequence="P29692-2">
        <position position="91"/>
    </location>
</feature>
<feature type="modified residue" description="Phosphoserine" evidence="20">
    <location sequence="P29692-2">
        <position position="94"/>
    </location>
</feature>
<feature type="sequence conflict" description="In Ref. 3; AAP35906, 4; EAW82228 and 5; AAH07847." evidence="12" ref="3 4 5">
    <original>D</original>
    <variation>E</variation>
    <location sequence="P29692-2">
        <position position="189"/>
    </location>
</feature>
<feature type="modified residue" description="Phosphoserine" evidence="20">
    <location sequence="P29692-3">
        <position position="40"/>
    </location>
</feature>
<accession>P29692</accession>
<accession>B4DDU4</accession>
<accession>D3DWK3</accession>
<accession>E9PBQ9</accession>
<accession>Q4VBZ6</accession>
<accession>Q969J1</accession>
<accession>Q96I38</accession>